<feature type="chain" id="PRO_1000186229" description="Purine nucleoside phosphorylase DeoD-type">
    <location>
        <begin position="1"/>
        <end position="237"/>
    </location>
</feature>
<feature type="active site" description="Proton donor" evidence="2">
    <location>
        <position position="204"/>
    </location>
</feature>
<feature type="binding site" evidence="1">
    <location>
        <position position="4"/>
    </location>
    <ligand>
        <name>a purine D-ribonucleoside</name>
        <dbReference type="ChEBI" id="CHEBI:142355"/>
        <note>ligand shared between dimeric partners</note>
    </ligand>
</feature>
<feature type="binding site" description="in other chain" evidence="1">
    <location>
        <position position="20"/>
    </location>
    <ligand>
        <name>phosphate</name>
        <dbReference type="ChEBI" id="CHEBI:43474"/>
        <note>ligand shared between dimeric partners</note>
    </ligand>
</feature>
<feature type="binding site" description="in other chain" evidence="1">
    <location>
        <position position="24"/>
    </location>
    <ligand>
        <name>phosphate</name>
        <dbReference type="ChEBI" id="CHEBI:43474"/>
        <note>ligand shared between dimeric partners</note>
    </ligand>
</feature>
<feature type="binding site" evidence="1">
    <location>
        <position position="43"/>
    </location>
    <ligand>
        <name>phosphate</name>
        <dbReference type="ChEBI" id="CHEBI:43474"/>
        <note>ligand shared between dimeric partners</note>
    </ligand>
</feature>
<feature type="binding site" description="in other chain" evidence="1">
    <location>
        <begin position="87"/>
        <end position="90"/>
    </location>
    <ligand>
        <name>phosphate</name>
        <dbReference type="ChEBI" id="CHEBI:43474"/>
        <note>ligand shared between dimeric partners</note>
    </ligand>
</feature>
<feature type="binding site" description="in other chain" evidence="1">
    <location>
        <begin position="179"/>
        <end position="181"/>
    </location>
    <ligand>
        <name>a purine D-ribonucleoside</name>
        <dbReference type="ChEBI" id="CHEBI:142355"/>
        <note>ligand shared between dimeric partners</note>
    </ligand>
</feature>
<feature type="binding site" description="in other chain" evidence="1">
    <location>
        <begin position="203"/>
        <end position="204"/>
    </location>
    <ligand>
        <name>a purine D-ribonucleoside</name>
        <dbReference type="ChEBI" id="CHEBI:142355"/>
        <note>ligand shared between dimeric partners</note>
    </ligand>
</feature>
<feature type="site" description="Important for catalytic activity" evidence="2">
    <location>
        <position position="218"/>
    </location>
</feature>
<comment type="function">
    <text evidence="2">Catalyzes the reversible phosphorolytic breakdown of the N-glycosidic bond in the beta-(deoxy)ribonucleoside molecules, with the formation of the corresponding free purine bases and pentose-1-phosphate.</text>
</comment>
<comment type="catalytic activity">
    <reaction evidence="2">
        <text>a purine D-ribonucleoside + phosphate = a purine nucleobase + alpha-D-ribose 1-phosphate</text>
        <dbReference type="Rhea" id="RHEA:19805"/>
        <dbReference type="ChEBI" id="CHEBI:26386"/>
        <dbReference type="ChEBI" id="CHEBI:43474"/>
        <dbReference type="ChEBI" id="CHEBI:57720"/>
        <dbReference type="ChEBI" id="CHEBI:142355"/>
        <dbReference type="EC" id="2.4.2.1"/>
    </reaction>
</comment>
<comment type="catalytic activity">
    <reaction evidence="2">
        <text>a purine 2'-deoxy-D-ribonucleoside + phosphate = a purine nucleobase + 2-deoxy-alpha-D-ribose 1-phosphate</text>
        <dbReference type="Rhea" id="RHEA:36431"/>
        <dbReference type="ChEBI" id="CHEBI:26386"/>
        <dbReference type="ChEBI" id="CHEBI:43474"/>
        <dbReference type="ChEBI" id="CHEBI:57259"/>
        <dbReference type="ChEBI" id="CHEBI:142361"/>
        <dbReference type="EC" id="2.4.2.1"/>
    </reaction>
</comment>
<comment type="subunit">
    <text evidence="2">Homohexamer; trimer of homodimers.</text>
</comment>
<comment type="similarity">
    <text evidence="2">Belongs to the PNP/UDP phosphorylase family.</text>
</comment>
<gene>
    <name evidence="2" type="primary">deoD</name>
    <name type="ordered locus">MGAS9429_Spy0755</name>
</gene>
<protein>
    <recommendedName>
        <fullName evidence="2">Purine nucleoside phosphorylase DeoD-type</fullName>
        <shortName evidence="2">PNP</shortName>
        <ecNumber evidence="2">2.4.2.1</ecNumber>
    </recommendedName>
</protein>
<dbReference type="EC" id="2.4.2.1" evidence="2"/>
<dbReference type="EMBL" id="CP000259">
    <property type="protein sequence ID" value="ABF31943.1"/>
    <property type="molecule type" value="Genomic_DNA"/>
</dbReference>
<dbReference type="RefSeq" id="WP_002990147.1">
    <property type="nucleotide sequence ID" value="NC_008021.1"/>
</dbReference>
<dbReference type="SMR" id="Q1JM69"/>
<dbReference type="KEGG" id="spk:MGAS9429_Spy0755"/>
<dbReference type="HOGENOM" id="CLU_068457_2_0_9"/>
<dbReference type="Proteomes" id="UP000002433">
    <property type="component" value="Chromosome"/>
</dbReference>
<dbReference type="GO" id="GO:0005829">
    <property type="term" value="C:cytosol"/>
    <property type="evidence" value="ECO:0007669"/>
    <property type="project" value="TreeGrafter"/>
</dbReference>
<dbReference type="GO" id="GO:0004731">
    <property type="term" value="F:purine-nucleoside phosphorylase activity"/>
    <property type="evidence" value="ECO:0007669"/>
    <property type="project" value="UniProtKB-UniRule"/>
</dbReference>
<dbReference type="GO" id="GO:0006152">
    <property type="term" value="P:purine nucleoside catabolic process"/>
    <property type="evidence" value="ECO:0007669"/>
    <property type="project" value="TreeGrafter"/>
</dbReference>
<dbReference type="CDD" id="cd09006">
    <property type="entry name" value="PNP_EcPNPI-like"/>
    <property type="match status" value="1"/>
</dbReference>
<dbReference type="Gene3D" id="3.40.50.1580">
    <property type="entry name" value="Nucleoside phosphorylase domain"/>
    <property type="match status" value="1"/>
</dbReference>
<dbReference type="HAMAP" id="MF_01627">
    <property type="entry name" value="Pur_nucleosid_phosp"/>
    <property type="match status" value="1"/>
</dbReference>
<dbReference type="InterPro" id="IPR004402">
    <property type="entry name" value="DeoD-type"/>
</dbReference>
<dbReference type="InterPro" id="IPR018016">
    <property type="entry name" value="Nucleoside_phosphorylase_CS"/>
</dbReference>
<dbReference type="InterPro" id="IPR000845">
    <property type="entry name" value="Nucleoside_phosphorylase_d"/>
</dbReference>
<dbReference type="InterPro" id="IPR035994">
    <property type="entry name" value="Nucleoside_phosphorylase_sf"/>
</dbReference>
<dbReference type="NCBIfam" id="TIGR00107">
    <property type="entry name" value="deoD"/>
    <property type="match status" value="1"/>
</dbReference>
<dbReference type="NCBIfam" id="NF004489">
    <property type="entry name" value="PRK05819.1"/>
    <property type="match status" value="1"/>
</dbReference>
<dbReference type="PANTHER" id="PTHR43691:SF11">
    <property type="entry name" value="FI09636P-RELATED"/>
    <property type="match status" value="1"/>
</dbReference>
<dbReference type="PANTHER" id="PTHR43691">
    <property type="entry name" value="URIDINE PHOSPHORYLASE"/>
    <property type="match status" value="1"/>
</dbReference>
<dbReference type="Pfam" id="PF01048">
    <property type="entry name" value="PNP_UDP_1"/>
    <property type="match status" value="1"/>
</dbReference>
<dbReference type="SUPFAM" id="SSF53167">
    <property type="entry name" value="Purine and uridine phosphorylases"/>
    <property type="match status" value="1"/>
</dbReference>
<dbReference type="PROSITE" id="PS01232">
    <property type="entry name" value="PNP_UDP_1"/>
    <property type="match status" value="1"/>
</dbReference>
<organism>
    <name type="scientific">Streptococcus pyogenes serotype M12 (strain MGAS9429)</name>
    <dbReference type="NCBI Taxonomy" id="370551"/>
    <lineage>
        <taxon>Bacteria</taxon>
        <taxon>Bacillati</taxon>
        <taxon>Bacillota</taxon>
        <taxon>Bacilli</taxon>
        <taxon>Lactobacillales</taxon>
        <taxon>Streptococcaceae</taxon>
        <taxon>Streptococcus</taxon>
    </lineage>
</organism>
<evidence type="ECO:0000250" key="1">
    <source>
        <dbReference type="UniProtKB" id="P50389"/>
    </source>
</evidence>
<evidence type="ECO:0000255" key="2">
    <source>
        <dbReference type="HAMAP-Rule" id="MF_01627"/>
    </source>
</evidence>
<keyword id="KW-0328">Glycosyltransferase</keyword>
<keyword id="KW-0808">Transferase</keyword>
<reference key="1">
    <citation type="journal article" date="2006" name="Proc. Natl. Acad. Sci. U.S.A.">
        <title>Molecular genetic anatomy of inter- and intraserotype variation in the human bacterial pathogen group A Streptococcus.</title>
        <authorList>
            <person name="Beres S.B."/>
            <person name="Richter E.W."/>
            <person name="Nagiec M.J."/>
            <person name="Sumby P."/>
            <person name="Porcella S.F."/>
            <person name="DeLeo F.R."/>
            <person name="Musser J.M."/>
        </authorList>
    </citation>
    <scope>NUCLEOTIDE SEQUENCE [LARGE SCALE GENOMIC DNA]</scope>
    <source>
        <strain>MGAS9429</strain>
    </source>
</reference>
<proteinExistence type="inferred from homology"/>
<sequence length="237" mass="26020">MSIHISAKKGDIADKILLPGDPLRAKFIAENFLEDAVCFNEVRNMFGYTGTYKGHRVSVMGTGMGMPSISIYARELIVDYGVKTLIRVGTAGAIDPEVHVRELVLAQAAATNSNIIRNDFPEFDFPQIADFGLLDKAYHIAREMGVTTHVGNVLSSDVFYTNMPERNMALGKLGVKAIEMEAAALYYLAAQHHVKALGIMTISDNLNDPTEDTTAEERQTTFTDMMKVGLETLIAND</sequence>
<accession>Q1JM69</accession>
<name>DEOD_STRPC</name>